<evidence type="ECO:0000255" key="1">
    <source>
        <dbReference type="HAMAP-Rule" id="MF_01376"/>
    </source>
</evidence>
<sequence>MTENHYLLLTPGPLTTTKTVKEVMLYDWCTWDVEYNMMVQQVRAKLVSLATKEEERYTTVLMQGSGTFSVEAVIGSVIPKNGKMLVCTNGAYGKRIVQMAEMLHIDVVVSQTEEWEPTNIVEVEKILQQDKEITHIAVVHCETTTGIINPIVDVCKLGKQYGKVTLVDAMSSFGGIEIDIAELQIDFLISSANKCIQGVPGFGFVIAKRDELLKCKGQARSLSLDLYDQWETMENQNGKWRFTSPTHVVHAFYQALLELEKEGGVKARYNRYDNNQKLLVNRMREIGFKPLVDEKYQSPIITSFIYPEEWFDFEQLYNELKRDGFVIYPGKISKVDTFRIGNIGDVHEADIHRLVDSIAKGVVIG</sequence>
<name>PHNW_BACCQ</name>
<comment type="function">
    <text evidence="1">Involved in phosphonate degradation.</text>
</comment>
<comment type="catalytic activity">
    <reaction evidence="1">
        <text>(2-aminoethyl)phosphonate + pyruvate = phosphonoacetaldehyde + L-alanine</text>
        <dbReference type="Rhea" id="RHEA:17021"/>
        <dbReference type="ChEBI" id="CHEBI:15361"/>
        <dbReference type="ChEBI" id="CHEBI:57418"/>
        <dbReference type="ChEBI" id="CHEBI:57972"/>
        <dbReference type="ChEBI" id="CHEBI:58383"/>
        <dbReference type="EC" id="2.6.1.37"/>
    </reaction>
</comment>
<comment type="cofactor">
    <cofactor evidence="1">
        <name>pyridoxal 5'-phosphate</name>
        <dbReference type="ChEBI" id="CHEBI:597326"/>
    </cofactor>
</comment>
<comment type="subunit">
    <text evidence="1">Homodimer.</text>
</comment>
<comment type="similarity">
    <text evidence="1">Belongs to the class-V pyridoxal-phosphate-dependent aminotransferase family. PhnW subfamily.</text>
</comment>
<organism>
    <name type="scientific">Bacillus cereus (strain Q1)</name>
    <dbReference type="NCBI Taxonomy" id="361100"/>
    <lineage>
        <taxon>Bacteria</taxon>
        <taxon>Bacillati</taxon>
        <taxon>Bacillota</taxon>
        <taxon>Bacilli</taxon>
        <taxon>Bacillales</taxon>
        <taxon>Bacillaceae</taxon>
        <taxon>Bacillus</taxon>
        <taxon>Bacillus cereus group</taxon>
    </lineage>
</organism>
<accession>B9IUR6</accession>
<gene>
    <name evidence="1" type="primary">phnW</name>
    <name type="ordered locus">BCQ_1399</name>
</gene>
<dbReference type="EC" id="2.6.1.37" evidence="1"/>
<dbReference type="EMBL" id="CP000227">
    <property type="protein sequence ID" value="ACM11827.1"/>
    <property type="molecule type" value="Genomic_DNA"/>
</dbReference>
<dbReference type="SMR" id="B9IUR6"/>
<dbReference type="KEGG" id="bcq:BCQ_1399"/>
<dbReference type="HOGENOM" id="CLU_027686_3_1_9"/>
<dbReference type="Proteomes" id="UP000000441">
    <property type="component" value="Chromosome"/>
</dbReference>
<dbReference type="GO" id="GO:0047304">
    <property type="term" value="F:2-aminoethylphosphonate-pyruvate transaminase activity"/>
    <property type="evidence" value="ECO:0007669"/>
    <property type="project" value="UniProtKB-UniRule"/>
</dbReference>
<dbReference type="GO" id="GO:0019700">
    <property type="term" value="P:organic phosphonate catabolic process"/>
    <property type="evidence" value="ECO:0007669"/>
    <property type="project" value="InterPro"/>
</dbReference>
<dbReference type="Gene3D" id="3.90.1150.10">
    <property type="entry name" value="Aspartate Aminotransferase, domain 1"/>
    <property type="match status" value="1"/>
</dbReference>
<dbReference type="Gene3D" id="3.40.640.10">
    <property type="entry name" value="Type I PLP-dependent aspartate aminotransferase-like (Major domain)"/>
    <property type="match status" value="1"/>
</dbReference>
<dbReference type="HAMAP" id="MF_01376">
    <property type="entry name" value="PhnW_aminotrans_5"/>
    <property type="match status" value="1"/>
</dbReference>
<dbReference type="InterPro" id="IPR000192">
    <property type="entry name" value="Aminotrans_V_dom"/>
</dbReference>
<dbReference type="InterPro" id="IPR012703">
    <property type="entry name" value="NH2EtPonate_pyrv_transaminase"/>
</dbReference>
<dbReference type="InterPro" id="IPR015424">
    <property type="entry name" value="PyrdxlP-dep_Trfase"/>
</dbReference>
<dbReference type="InterPro" id="IPR015421">
    <property type="entry name" value="PyrdxlP-dep_Trfase_major"/>
</dbReference>
<dbReference type="InterPro" id="IPR015422">
    <property type="entry name" value="PyrdxlP-dep_Trfase_small"/>
</dbReference>
<dbReference type="InterPro" id="IPR024169">
    <property type="entry name" value="SP_NH2Trfase/AEP_transaminase"/>
</dbReference>
<dbReference type="NCBIfam" id="TIGR03301">
    <property type="entry name" value="PhnW-AepZ"/>
    <property type="match status" value="1"/>
</dbReference>
<dbReference type="NCBIfam" id="NF010006">
    <property type="entry name" value="PRK13479.1"/>
    <property type="match status" value="1"/>
</dbReference>
<dbReference type="NCBIfam" id="TIGR02326">
    <property type="entry name" value="transamin_PhnW"/>
    <property type="match status" value="1"/>
</dbReference>
<dbReference type="PANTHER" id="PTHR42778">
    <property type="entry name" value="2-AMINOETHYLPHOSPHONATE--PYRUVATE TRANSAMINASE"/>
    <property type="match status" value="1"/>
</dbReference>
<dbReference type="PANTHER" id="PTHR42778:SF1">
    <property type="entry name" value="2-AMINOETHYLPHOSPHONATE--PYRUVATE TRANSAMINASE"/>
    <property type="match status" value="1"/>
</dbReference>
<dbReference type="Pfam" id="PF00266">
    <property type="entry name" value="Aminotran_5"/>
    <property type="match status" value="1"/>
</dbReference>
<dbReference type="PIRSF" id="PIRSF000524">
    <property type="entry name" value="SPT"/>
    <property type="match status" value="1"/>
</dbReference>
<dbReference type="SUPFAM" id="SSF53383">
    <property type="entry name" value="PLP-dependent transferases"/>
    <property type="match status" value="1"/>
</dbReference>
<keyword id="KW-0032">Aminotransferase</keyword>
<keyword id="KW-0663">Pyridoxal phosphate</keyword>
<keyword id="KW-0670">Pyruvate</keyword>
<keyword id="KW-0808">Transferase</keyword>
<protein>
    <recommendedName>
        <fullName evidence="1">2-aminoethylphosphonate--pyruvate transaminase</fullName>
        <ecNumber evidence="1">2.6.1.37</ecNumber>
    </recommendedName>
    <alternativeName>
        <fullName evidence="1">2-aminoethylphosphonate aminotransferase</fullName>
    </alternativeName>
    <alternativeName>
        <fullName evidence="1">AEP transaminase</fullName>
        <shortName evidence="1">AEPT</shortName>
    </alternativeName>
</protein>
<feature type="chain" id="PRO_1000184193" description="2-aminoethylphosphonate--pyruvate transaminase">
    <location>
        <begin position="1"/>
        <end position="365"/>
    </location>
</feature>
<feature type="modified residue" description="N6-(pyridoxal phosphate)lysine" evidence="1">
    <location>
        <position position="194"/>
    </location>
</feature>
<proteinExistence type="inferred from homology"/>
<reference key="1">
    <citation type="journal article" date="2009" name="J. Bacteriol.">
        <title>Complete genome sequence of the extremophilic Bacillus cereus strain Q1 with industrial applications.</title>
        <authorList>
            <person name="Xiong Z."/>
            <person name="Jiang Y."/>
            <person name="Qi D."/>
            <person name="Lu H."/>
            <person name="Yang F."/>
            <person name="Yang J."/>
            <person name="Chen L."/>
            <person name="Sun L."/>
            <person name="Xu X."/>
            <person name="Xue Y."/>
            <person name="Zhu Y."/>
            <person name="Jin Q."/>
        </authorList>
    </citation>
    <scope>NUCLEOTIDE SEQUENCE [LARGE SCALE GENOMIC DNA]</scope>
    <source>
        <strain>Q1</strain>
    </source>
</reference>